<name>GCL1_ARATH</name>
<accession>Q9FJN7</accession>
<accession>Q940G7</accession>
<protein>
    <recommendedName>
        <fullName>LanC-like protein GCL1</fullName>
    </recommendedName>
    <alternativeName>
        <fullName>G protein-coupled receptor 2-like protein 1</fullName>
        <shortName>Protein GCR2-like 1</shortName>
    </alternativeName>
</protein>
<reference key="1">
    <citation type="journal article" date="1998" name="DNA Res.">
        <title>Structural analysis of Arabidopsis thaliana chromosome 5. VI. Sequence features of the regions of 1,367,185 bp covered by 19 physically assigned P1 and TAC clones.</title>
        <authorList>
            <person name="Kotani H."/>
            <person name="Nakamura Y."/>
            <person name="Sato S."/>
            <person name="Asamizu E."/>
            <person name="Kaneko T."/>
            <person name="Miyajima N."/>
            <person name="Tabata S."/>
        </authorList>
    </citation>
    <scope>NUCLEOTIDE SEQUENCE [LARGE SCALE GENOMIC DNA]</scope>
    <source>
        <strain>cv. Columbia</strain>
    </source>
</reference>
<reference key="2">
    <citation type="journal article" date="2017" name="Plant J.">
        <title>Araport11: a complete reannotation of the Arabidopsis thaliana reference genome.</title>
        <authorList>
            <person name="Cheng C.Y."/>
            <person name="Krishnakumar V."/>
            <person name="Chan A.P."/>
            <person name="Thibaud-Nissen F."/>
            <person name="Schobel S."/>
            <person name="Town C.D."/>
        </authorList>
    </citation>
    <scope>GENOME REANNOTATION</scope>
    <source>
        <strain>cv. Columbia</strain>
    </source>
</reference>
<reference key="3">
    <citation type="journal article" date="2003" name="Science">
        <title>Empirical analysis of transcriptional activity in the Arabidopsis genome.</title>
        <authorList>
            <person name="Yamada K."/>
            <person name="Lim J."/>
            <person name="Dale J.M."/>
            <person name="Chen H."/>
            <person name="Shinn P."/>
            <person name="Palm C.J."/>
            <person name="Southwick A.M."/>
            <person name="Wu H.C."/>
            <person name="Kim C.J."/>
            <person name="Nguyen M."/>
            <person name="Pham P.K."/>
            <person name="Cheuk R.F."/>
            <person name="Karlin-Newmann G."/>
            <person name="Liu S.X."/>
            <person name="Lam B."/>
            <person name="Sakano H."/>
            <person name="Wu T."/>
            <person name="Yu G."/>
            <person name="Miranda M."/>
            <person name="Quach H.L."/>
            <person name="Tripp M."/>
            <person name="Chang C.H."/>
            <person name="Lee J.M."/>
            <person name="Toriumi M.J."/>
            <person name="Chan M.M."/>
            <person name="Tang C.C."/>
            <person name="Onodera C.S."/>
            <person name="Deng J.M."/>
            <person name="Akiyama K."/>
            <person name="Ansari Y."/>
            <person name="Arakawa T."/>
            <person name="Banh J."/>
            <person name="Banno F."/>
            <person name="Bowser L."/>
            <person name="Brooks S.Y."/>
            <person name="Carninci P."/>
            <person name="Chao Q."/>
            <person name="Choy N."/>
            <person name="Enju A."/>
            <person name="Goldsmith A.D."/>
            <person name="Gurjal M."/>
            <person name="Hansen N.F."/>
            <person name="Hayashizaki Y."/>
            <person name="Johnson-Hopson C."/>
            <person name="Hsuan V.W."/>
            <person name="Iida K."/>
            <person name="Karnes M."/>
            <person name="Khan S."/>
            <person name="Koesema E."/>
            <person name="Ishida J."/>
            <person name="Jiang P.X."/>
            <person name="Jones T."/>
            <person name="Kawai J."/>
            <person name="Kamiya A."/>
            <person name="Meyers C."/>
            <person name="Nakajima M."/>
            <person name="Narusaka M."/>
            <person name="Seki M."/>
            <person name="Sakurai T."/>
            <person name="Satou M."/>
            <person name="Tamse R."/>
            <person name="Vaysberg M."/>
            <person name="Wallender E.K."/>
            <person name="Wong C."/>
            <person name="Yamamura Y."/>
            <person name="Yuan S."/>
            <person name="Shinozaki K."/>
            <person name="Davis R.W."/>
            <person name="Theologis A."/>
            <person name="Ecker J.R."/>
        </authorList>
    </citation>
    <scope>NUCLEOTIDE SEQUENCE [LARGE SCALE MRNA]</scope>
    <source>
        <strain>cv. Columbia</strain>
    </source>
</reference>
<reference key="4">
    <citation type="journal article" date="2007" name="Plant J.">
        <title>Genetic characterization reveals no role for the reported ABA receptor, GCR2, in ABA control of seed germination and early seedling development in Arabidopsis.</title>
        <authorList>
            <person name="Gao Y."/>
            <person name="Zeng Q."/>
            <person name="Guo J."/>
            <person name="Cheng J."/>
            <person name="Ellis B.E."/>
            <person name="Chen J.G."/>
        </authorList>
    </citation>
    <scope>FUNCTION</scope>
    <scope>DISRUPTION PHENOTYPE</scope>
</reference>
<reference key="5">
    <citation type="journal article" date="2008" name="PLoS ONE">
        <title>The GCR2 gene family is not required for ABA control of seed germination and early seedling development in Arabidopsis.</title>
        <authorList>
            <person name="Guo J."/>
            <person name="Zeng Q."/>
            <person name="Emami M."/>
            <person name="Ellis B.E."/>
            <person name="Chen J.G."/>
        </authorList>
    </citation>
    <scope>FUNCTION</scope>
    <scope>DISRUPTION PHENOTYPE</scope>
</reference>
<gene>
    <name type="primary">GCL1</name>
    <name type="ordered locus">At5g65280</name>
    <name type="ORF">MQN23.23</name>
</gene>
<feature type="chain" id="PRO_0000424628" description="LanC-like protein GCL1">
    <location>
        <begin position="1"/>
        <end position="433"/>
    </location>
</feature>
<feature type="region of interest" description="Disordered" evidence="1">
    <location>
        <begin position="1"/>
        <end position="22"/>
    </location>
</feature>
<feature type="sequence conflict" description="In Ref. 3; AAK96841/AAM91135." evidence="4" ref="3">
    <original>T</original>
    <variation>R</variation>
    <location>
        <position position="9"/>
    </location>
</feature>
<keyword id="KW-1185">Reference proteome</keyword>
<evidence type="ECO:0000256" key="1">
    <source>
        <dbReference type="SAM" id="MobiDB-lite"/>
    </source>
</evidence>
<evidence type="ECO:0000269" key="2">
    <source>
    </source>
</evidence>
<evidence type="ECO:0000269" key="3">
    <source>
    </source>
</evidence>
<evidence type="ECO:0000305" key="4"/>
<organism>
    <name type="scientific">Arabidopsis thaliana</name>
    <name type="common">Mouse-ear cress</name>
    <dbReference type="NCBI Taxonomy" id="3702"/>
    <lineage>
        <taxon>Eukaryota</taxon>
        <taxon>Viridiplantae</taxon>
        <taxon>Streptophyta</taxon>
        <taxon>Embryophyta</taxon>
        <taxon>Tracheophyta</taxon>
        <taxon>Spermatophyta</taxon>
        <taxon>Magnoliopsida</taxon>
        <taxon>eudicotyledons</taxon>
        <taxon>Gunneridae</taxon>
        <taxon>Pentapetalae</taxon>
        <taxon>rosids</taxon>
        <taxon>malvids</taxon>
        <taxon>Brassicales</taxon>
        <taxon>Brassicaceae</taxon>
        <taxon>Camelineae</taxon>
        <taxon>Arabidopsis</taxon>
    </lineage>
</organism>
<comment type="function">
    <text evidence="2 3">May play a role in signaling. May be not involved in abscisic acid (ABA) signaling.</text>
</comment>
<comment type="disruption phenotype">
    <text evidence="2 3">No visible phenotype under normal growth conditions.</text>
</comment>
<comment type="similarity">
    <text evidence="4">Belongs to the LanC-like protein family.</text>
</comment>
<dbReference type="EMBL" id="AB013395">
    <property type="protein sequence ID" value="BAB11664.1"/>
    <property type="molecule type" value="Genomic_DNA"/>
</dbReference>
<dbReference type="EMBL" id="CP002688">
    <property type="protein sequence ID" value="AED98033.1"/>
    <property type="molecule type" value="Genomic_DNA"/>
</dbReference>
<dbReference type="EMBL" id="AY054650">
    <property type="protein sequence ID" value="AAK96841.1"/>
    <property type="molecule type" value="mRNA"/>
</dbReference>
<dbReference type="EMBL" id="AY058076">
    <property type="protein sequence ID" value="AAL24184.1"/>
    <property type="molecule type" value="mRNA"/>
</dbReference>
<dbReference type="EMBL" id="AY128735">
    <property type="protein sequence ID" value="AAM91135.1"/>
    <property type="molecule type" value="mRNA"/>
</dbReference>
<dbReference type="RefSeq" id="NP_201331.1">
    <property type="nucleotide sequence ID" value="NM_125926.4"/>
</dbReference>
<dbReference type="SMR" id="Q9FJN7"/>
<dbReference type="BioGRID" id="21895">
    <property type="interactions" value="20"/>
</dbReference>
<dbReference type="FunCoup" id="Q9FJN7">
    <property type="interactions" value="1765"/>
</dbReference>
<dbReference type="STRING" id="3702.Q9FJN7"/>
<dbReference type="PaxDb" id="3702-AT5G65280.1"/>
<dbReference type="ProteomicsDB" id="221950"/>
<dbReference type="EnsemblPlants" id="AT5G65280.1">
    <property type="protein sequence ID" value="AT5G65280.1"/>
    <property type="gene ID" value="AT5G65280"/>
</dbReference>
<dbReference type="GeneID" id="836653"/>
<dbReference type="Gramene" id="AT5G65280.1">
    <property type="protein sequence ID" value="AT5G65280.1"/>
    <property type="gene ID" value="AT5G65280"/>
</dbReference>
<dbReference type="KEGG" id="ath:AT5G65280"/>
<dbReference type="Araport" id="AT5G65280"/>
<dbReference type="TAIR" id="AT5G65280">
    <property type="gene designation" value="GCL1"/>
</dbReference>
<dbReference type="eggNOG" id="KOG2787">
    <property type="taxonomic scope" value="Eukaryota"/>
</dbReference>
<dbReference type="HOGENOM" id="CLU_036244_0_1_1"/>
<dbReference type="InParanoid" id="Q9FJN7"/>
<dbReference type="PhylomeDB" id="Q9FJN7"/>
<dbReference type="PRO" id="PR:Q9FJN7"/>
<dbReference type="Proteomes" id="UP000006548">
    <property type="component" value="Chromosome 5"/>
</dbReference>
<dbReference type="ExpressionAtlas" id="Q9FJN7">
    <property type="expression patterns" value="baseline and differential"/>
</dbReference>
<dbReference type="GO" id="GO:0019898">
    <property type="term" value="C:extrinsic component of membrane"/>
    <property type="evidence" value="ECO:0000250"/>
    <property type="project" value="TAIR"/>
</dbReference>
<dbReference type="GO" id="GO:0005975">
    <property type="term" value="P:carbohydrate metabolic process"/>
    <property type="evidence" value="ECO:0007669"/>
    <property type="project" value="InterPro"/>
</dbReference>
<dbReference type="GO" id="GO:0031179">
    <property type="term" value="P:peptide modification"/>
    <property type="evidence" value="ECO:0007669"/>
    <property type="project" value="InterPro"/>
</dbReference>
<dbReference type="CDD" id="cd04794">
    <property type="entry name" value="euk_LANCL"/>
    <property type="match status" value="1"/>
</dbReference>
<dbReference type="FunFam" id="1.50.10.10:FF:000061">
    <property type="entry name" value="LanC-like protein 2"/>
    <property type="match status" value="1"/>
</dbReference>
<dbReference type="Gene3D" id="1.50.10.10">
    <property type="match status" value="1"/>
</dbReference>
<dbReference type="InterPro" id="IPR012341">
    <property type="entry name" value="6hp_glycosidase-like_sf"/>
</dbReference>
<dbReference type="InterPro" id="IPR007822">
    <property type="entry name" value="LANC-like"/>
</dbReference>
<dbReference type="InterPro" id="IPR020464">
    <property type="entry name" value="LanC-like_prot_euk"/>
</dbReference>
<dbReference type="PANTHER" id="PTHR12736">
    <property type="entry name" value="LANC-LIKE PROTEIN"/>
    <property type="match status" value="1"/>
</dbReference>
<dbReference type="PANTHER" id="PTHR12736:SF25">
    <property type="entry name" value="LANC-LIKE PROTEIN GCL1"/>
    <property type="match status" value="1"/>
</dbReference>
<dbReference type="Pfam" id="PF05147">
    <property type="entry name" value="LANC_like"/>
    <property type="match status" value="1"/>
</dbReference>
<dbReference type="PRINTS" id="PR01951">
    <property type="entry name" value="LANCEUKARYTE"/>
</dbReference>
<dbReference type="PRINTS" id="PR01950">
    <property type="entry name" value="LANCSUPER"/>
</dbReference>
<dbReference type="SMART" id="SM01260">
    <property type="entry name" value="LANC_like"/>
    <property type="match status" value="1"/>
</dbReference>
<dbReference type="SUPFAM" id="SSF158745">
    <property type="entry name" value="LanC-like"/>
    <property type="match status" value="1"/>
</dbReference>
<proteinExistence type="evidence at transcript level"/>
<sequence>MSSSVDFVTEQGRCGDDGNGAGETVKNGEIDHLLSEPSAPTISLPTESFLRAATLLKNQVVEATWKGGVEALASGSGPVLDPTVYTGLLGTAFTCLKSYEVTRNHQDLLTCAEIIDTCANVARATTRHVTFLCGRGGVCTLGAIVANYRGDQSKRDFFLGLFLELAEERELPAGPEEGGFGMSYDLLYGRAGFLWAALFLNRYLGQGTVPDHLLSPIVAAILAGGRVGAADHEACPLLYRFHGTRFWGAANGLAGILYVLLHFPLSEEDVKDVQGTLRYMMSNRFPNSGNYPCSEGNPRDKLVQWAHGATGMAITLAKASQVFPKERDFREAAIEAGEVVWKSGLVKKVGLADGVAGNAYAFLSLYRLTGDVVYEERAKAFASYLCRDAIELVNMTSQETEHDYSLFRGLAGPVCLWFDLVSPVDSKFPGYEI</sequence>